<proteinExistence type="evidence at transcript level"/>
<reference key="1">
    <citation type="journal article" date="2002" name="Int. J. Mol. Med.">
        <title>Molecular cloning and characterization of mouse Wnt14b, clustered with mouse Wnt3 in mouse chromosome 11.</title>
        <authorList>
            <person name="Kirikoshi H."/>
            <person name="Katoh M."/>
        </authorList>
    </citation>
    <scope>NUCLEOTIDE SEQUENCE [MRNA]</scope>
</reference>
<reference key="2">
    <citation type="journal article" date="2003" name="Genomics">
        <title>Mouse Wnt9b transforming activity, tissue-specific expression, and evolution.</title>
        <authorList>
            <person name="Qian J."/>
            <person name="Jiang Z."/>
            <person name="Li M."/>
            <person name="Heaphy P."/>
            <person name="Liu Y.H."/>
            <person name="Shackleford G.M."/>
        </authorList>
    </citation>
    <scope>NUCLEOTIDE SEQUENCE [MRNA]</scope>
    <source>
        <strain>BALB/cJ</strain>
    </source>
</reference>
<reference key="3">
    <citation type="journal article" date="1997" name="Genomics">
        <title>Isolation of two novel WNT genes, WNT14 and WNT15, one of which (WNT15) is closely linked to WNT3 on human chromosome 17q21.</title>
        <authorList>
            <person name="Bergstein I."/>
            <person name="Eisenberg L.M."/>
            <person name="Bhalerao J."/>
            <person name="Jenkins N.A."/>
            <person name="Copeland N.G."/>
            <person name="Osborne M.P."/>
            <person name="Bowcock A.M."/>
            <person name="Brown A.M.C."/>
        </authorList>
    </citation>
    <scope>NUCLEOTIDE SEQUENCE [GENOMIC DNA] OF 211-310</scope>
</reference>
<reference key="4">
    <citation type="journal article" date="2005" name="Dev. Cell">
        <title>Wnt9b plays a central role in the regulation of mesenchymal to epithelial transitions underlying organogenesis of the mammalian urogenital system.</title>
        <authorList>
            <person name="Carroll T.J."/>
            <person name="Park J.S."/>
            <person name="Hayashi S."/>
            <person name="Majumdar A."/>
            <person name="McMahon A.P."/>
        </authorList>
    </citation>
    <scope>FUNCTION</scope>
    <scope>DEVELOPMENTAL STAGE</scope>
    <scope>DISRUPTION PHENOTYPE</scope>
</reference>
<reference key="5">
    <citation type="journal article" date="2007" name="Development">
        <title>Wnt/beta-catenin signaling regulates nephron induction during mouse kidney development.</title>
        <authorList>
            <person name="Park J.S."/>
            <person name="Valerius M.T."/>
            <person name="McMahon A.P."/>
        </authorList>
    </citation>
    <scope>FUNCTION</scope>
</reference>
<reference key="6">
    <citation type="journal article" date="2012" name="Development">
        <title>Wnt9b-dependent FGF signaling is crucial for outgrowth of the nasal and maxillary processes during upper jaw and lip development.</title>
        <authorList>
            <person name="Jin Y.R."/>
            <person name="Han X.H."/>
            <person name="Taketo M.M."/>
            <person name="Yoon J.K."/>
        </authorList>
    </citation>
    <scope>FUNCTION</scope>
    <scope>DISRUPTION PHENOTYPE</scope>
</reference>
<reference key="7">
    <citation type="journal article" date="2014" name="Birth Defects Res. A Clin. Mol. Teratol.">
        <title>Epigenetic mechanism causes Wnt9b deficiency and nonsyndromic cleft lip and palate in the A/WySn mouse strain.</title>
        <authorList>
            <person name="Juriloff D.M."/>
            <person name="Harris M.J."/>
            <person name="Mager D.L."/>
            <person name="Gagnier L."/>
        </authorList>
    </citation>
    <scope>DISEASE</scope>
    <scope>FUNCTION</scope>
    <scope>DEVELOPMENTAL STAGE</scope>
    <source>
        <strain evidence="11">A/WySn</strain>
    </source>
</reference>
<dbReference type="EMBL" id="AB073819">
    <property type="protein sequence ID" value="BAB83866.1"/>
    <property type="molecule type" value="mRNA"/>
</dbReference>
<dbReference type="EMBL" id="AF469004">
    <property type="protein sequence ID" value="AAL82385.1"/>
    <property type="molecule type" value="mRNA"/>
</dbReference>
<dbReference type="EMBL" id="AF031169">
    <property type="protein sequence ID" value="AAC39950.1"/>
    <property type="molecule type" value="Genomic_DNA"/>
</dbReference>
<dbReference type="CCDS" id="CCDS25522.1"/>
<dbReference type="RefSeq" id="NP_035849.3">
    <property type="nucleotide sequence ID" value="NM_011719.4"/>
</dbReference>
<dbReference type="SMR" id="O35468"/>
<dbReference type="DIP" id="DIP-59409N"/>
<dbReference type="FunCoup" id="O35468">
    <property type="interactions" value="435"/>
</dbReference>
<dbReference type="IntAct" id="O35468">
    <property type="interactions" value="2"/>
</dbReference>
<dbReference type="MINT" id="O35468"/>
<dbReference type="STRING" id="10090.ENSMUSP00000018630"/>
<dbReference type="GlyCosmos" id="O35468">
    <property type="glycosylation" value="1 site, No reported glycans"/>
</dbReference>
<dbReference type="GlyGen" id="O35468">
    <property type="glycosylation" value="1 site, 1 N-linked glycan (1 site)"/>
</dbReference>
<dbReference type="PhosphoSitePlus" id="O35468"/>
<dbReference type="PaxDb" id="10090-ENSMUSP00000018630"/>
<dbReference type="Antibodypedia" id="17705">
    <property type="antibodies" value="162 antibodies from 33 providers"/>
</dbReference>
<dbReference type="DNASU" id="22412"/>
<dbReference type="Ensembl" id="ENSMUST00000018630.3">
    <property type="protein sequence ID" value="ENSMUSP00000018630.3"/>
    <property type="gene ID" value="ENSMUSG00000018486.3"/>
</dbReference>
<dbReference type="GeneID" id="22412"/>
<dbReference type="KEGG" id="mmu:22412"/>
<dbReference type="UCSC" id="uc007lvr.1">
    <property type="organism name" value="mouse"/>
</dbReference>
<dbReference type="AGR" id="MGI:1197020"/>
<dbReference type="CTD" id="7484"/>
<dbReference type="MGI" id="MGI:1197020">
    <property type="gene designation" value="Wnt9b"/>
</dbReference>
<dbReference type="VEuPathDB" id="HostDB:ENSMUSG00000018486"/>
<dbReference type="eggNOG" id="KOG3913">
    <property type="taxonomic scope" value="Eukaryota"/>
</dbReference>
<dbReference type="GeneTree" id="ENSGT00940000158599"/>
<dbReference type="HOGENOM" id="CLU_033039_2_0_1"/>
<dbReference type="InParanoid" id="O35468"/>
<dbReference type="OMA" id="PTQGSAH"/>
<dbReference type="OrthoDB" id="5945655at2759"/>
<dbReference type="PhylomeDB" id="O35468"/>
<dbReference type="TreeFam" id="TF105310"/>
<dbReference type="Reactome" id="R-MMU-3238698">
    <property type="pathway name" value="WNT ligand biogenesis and trafficking"/>
</dbReference>
<dbReference type="BioGRID-ORCS" id="22412">
    <property type="hits" value="3 hits in 78 CRISPR screens"/>
</dbReference>
<dbReference type="PRO" id="PR:O35468"/>
<dbReference type="Proteomes" id="UP000000589">
    <property type="component" value="Chromosome 11"/>
</dbReference>
<dbReference type="RNAct" id="O35468">
    <property type="molecule type" value="protein"/>
</dbReference>
<dbReference type="Bgee" id="ENSMUSG00000018486">
    <property type="expression patterns" value="Expressed in interventricular septum and 87 other cell types or tissues"/>
</dbReference>
<dbReference type="ExpressionAtlas" id="O35468">
    <property type="expression patterns" value="baseline and differential"/>
</dbReference>
<dbReference type="GO" id="GO:0005576">
    <property type="term" value="C:extracellular region"/>
    <property type="evidence" value="ECO:0000304"/>
    <property type="project" value="Reactome"/>
</dbReference>
<dbReference type="GO" id="GO:1990851">
    <property type="term" value="C:Wnt-Frizzled-LRP5/6 complex"/>
    <property type="evidence" value="ECO:0000305"/>
    <property type="project" value="ParkinsonsUK-UCL"/>
</dbReference>
<dbReference type="GO" id="GO:0039706">
    <property type="term" value="F:co-receptor binding"/>
    <property type="evidence" value="ECO:0000353"/>
    <property type="project" value="ParkinsonsUK-UCL"/>
</dbReference>
<dbReference type="GO" id="GO:0048018">
    <property type="term" value="F:receptor ligand activity"/>
    <property type="evidence" value="ECO:0007669"/>
    <property type="project" value="Ensembl"/>
</dbReference>
<dbReference type="GO" id="GO:0005102">
    <property type="term" value="F:signaling receptor binding"/>
    <property type="evidence" value="ECO:0000353"/>
    <property type="project" value="ParkinsonsUK-UCL"/>
</dbReference>
<dbReference type="GO" id="GO:0009887">
    <property type="term" value="P:animal organ morphogenesis"/>
    <property type="evidence" value="ECO:0000304"/>
    <property type="project" value="MGI"/>
</dbReference>
<dbReference type="GO" id="GO:0001658">
    <property type="term" value="P:branching involved in ureteric bud morphogenesis"/>
    <property type="evidence" value="ECO:0000315"/>
    <property type="project" value="MGI"/>
</dbReference>
<dbReference type="GO" id="GO:0048754">
    <property type="term" value="P:branching morphogenesis of an epithelial tube"/>
    <property type="evidence" value="ECO:0000315"/>
    <property type="project" value="MGI"/>
</dbReference>
<dbReference type="GO" id="GO:0060070">
    <property type="term" value="P:canonical Wnt signaling pathway"/>
    <property type="evidence" value="ECO:0000316"/>
    <property type="project" value="MGI"/>
</dbReference>
<dbReference type="GO" id="GO:0007267">
    <property type="term" value="P:cell-cell signaling"/>
    <property type="evidence" value="ECO:0000304"/>
    <property type="project" value="MGI"/>
</dbReference>
<dbReference type="GO" id="GO:0009267">
    <property type="term" value="P:cellular response to starvation"/>
    <property type="evidence" value="ECO:0000270"/>
    <property type="project" value="MGI"/>
</dbReference>
<dbReference type="GO" id="GO:0072044">
    <property type="term" value="P:collecting duct development"/>
    <property type="evidence" value="ECO:0000315"/>
    <property type="project" value="MGI"/>
</dbReference>
<dbReference type="GO" id="GO:0048701">
    <property type="term" value="P:embryonic cranial skeleton morphogenesis"/>
    <property type="evidence" value="ECO:0000315"/>
    <property type="project" value="MGI"/>
</dbReference>
<dbReference type="GO" id="GO:0072046">
    <property type="term" value="P:establishment of planar polarity involved in nephron morphogenesis"/>
    <property type="evidence" value="ECO:0000315"/>
    <property type="project" value="MGI"/>
</dbReference>
<dbReference type="GO" id="GO:0001701">
    <property type="term" value="P:in utero embryonic development"/>
    <property type="evidence" value="ECO:0000315"/>
    <property type="project" value="MGI"/>
</dbReference>
<dbReference type="GO" id="GO:0001822">
    <property type="term" value="P:kidney development"/>
    <property type="evidence" value="ECO:0000315"/>
    <property type="project" value="MGI"/>
</dbReference>
<dbReference type="GO" id="GO:0060993">
    <property type="term" value="P:kidney morphogenesis"/>
    <property type="evidence" value="ECO:0000315"/>
    <property type="project" value="MGI"/>
</dbReference>
<dbReference type="GO" id="GO:0072003">
    <property type="term" value="P:kidney rudiment formation"/>
    <property type="evidence" value="ECO:0000315"/>
    <property type="project" value="MGI"/>
</dbReference>
<dbReference type="GO" id="GO:0030539">
    <property type="term" value="P:male genitalia development"/>
    <property type="evidence" value="ECO:0000315"/>
    <property type="project" value="MGI"/>
</dbReference>
<dbReference type="GO" id="GO:0072038">
    <property type="term" value="P:mesenchymal stem cell maintenance involved in nephron morphogenesis"/>
    <property type="evidence" value="ECO:0000315"/>
    <property type="project" value="MGI"/>
</dbReference>
<dbReference type="GO" id="GO:0072181">
    <property type="term" value="P:mesonephric duct formation"/>
    <property type="evidence" value="ECO:0000315"/>
    <property type="project" value="MGI"/>
</dbReference>
<dbReference type="GO" id="GO:0072164">
    <property type="term" value="P:mesonephric tubule development"/>
    <property type="evidence" value="ECO:0000315"/>
    <property type="project" value="MGI"/>
</dbReference>
<dbReference type="GO" id="GO:0072170">
    <property type="term" value="P:metanephric tubule development"/>
    <property type="evidence" value="ECO:0000315"/>
    <property type="project" value="MGI"/>
</dbReference>
<dbReference type="GO" id="GO:0072174">
    <property type="term" value="P:metanephric tubule formation"/>
    <property type="evidence" value="ECO:0000315"/>
    <property type="project" value="MGI"/>
</dbReference>
<dbReference type="GO" id="GO:1904948">
    <property type="term" value="P:midbrain dopaminergic neuron differentiation"/>
    <property type="evidence" value="ECO:0007669"/>
    <property type="project" value="Ensembl"/>
</dbReference>
<dbReference type="GO" id="GO:1902455">
    <property type="term" value="P:negative regulation of stem cell population maintenance"/>
    <property type="evidence" value="ECO:0007669"/>
    <property type="project" value="Ensembl"/>
</dbReference>
<dbReference type="GO" id="GO:0072078">
    <property type="term" value="P:nephron tubule morphogenesis"/>
    <property type="evidence" value="ECO:0000315"/>
    <property type="project" value="MGI"/>
</dbReference>
<dbReference type="GO" id="GO:0009786">
    <property type="term" value="P:regulation of asymmetric cell division"/>
    <property type="evidence" value="ECO:0000315"/>
    <property type="project" value="MGI"/>
</dbReference>
<dbReference type="GO" id="GO:0003339">
    <property type="term" value="P:regulation of mesenchymal to epithelial transition involved in metanephros morphogenesis"/>
    <property type="evidence" value="ECO:0000314"/>
    <property type="project" value="MGI"/>
</dbReference>
<dbReference type="GO" id="GO:0035150">
    <property type="term" value="P:regulation of tube size"/>
    <property type="evidence" value="ECO:0000315"/>
    <property type="project" value="MGI"/>
</dbReference>
<dbReference type="GO" id="GO:0060021">
    <property type="term" value="P:roof of mouth development"/>
    <property type="evidence" value="ECO:0000315"/>
    <property type="project" value="MGI"/>
</dbReference>
<dbReference type="GO" id="GO:0007165">
    <property type="term" value="P:signal transduction"/>
    <property type="evidence" value="ECO:0000304"/>
    <property type="project" value="MGI"/>
</dbReference>
<dbReference type="GO" id="GO:0061038">
    <property type="term" value="P:uterus morphogenesis"/>
    <property type="evidence" value="ECO:0000315"/>
    <property type="project" value="MGI"/>
</dbReference>
<dbReference type="GO" id="GO:0016055">
    <property type="term" value="P:Wnt signaling pathway"/>
    <property type="evidence" value="ECO:0000315"/>
    <property type="project" value="MGI"/>
</dbReference>
<dbReference type="GO" id="GO:0060071">
    <property type="term" value="P:Wnt signaling pathway, planar cell polarity pathway"/>
    <property type="evidence" value="ECO:0000315"/>
    <property type="project" value="MGI"/>
</dbReference>
<dbReference type="CDD" id="cd19354">
    <property type="entry name" value="Wnt_Wnt9b"/>
    <property type="match status" value="1"/>
</dbReference>
<dbReference type="FunFam" id="3.30.2460.20:FF:000002">
    <property type="entry name" value="Protein Wnt"/>
    <property type="match status" value="1"/>
</dbReference>
<dbReference type="Gene3D" id="3.30.2460.20">
    <property type="match status" value="1"/>
</dbReference>
<dbReference type="InterPro" id="IPR005817">
    <property type="entry name" value="Wnt"/>
</dbReference>
<dbReference type="InterPro" id="IPR043158">
    <property type="entry name" value="Wnt_C"/>
</dbReference>
<dbReference type="InterPro" id="IPR018161">
    <property type="entry name" value="Wnt_CS"/>
</dbReference>
<dbReference type="PANTHER" id="PTHR12027:SF84">
    <property type="entry name" value="PROTEIN WNT-9B"/>
    <property type="match status" value="1"/>
</dbReference>
<dbReference type="PANTHER" id="PTHR12027">
    <property type="entry name" value="WNT RELATED"/>
    <property type="match status" value="1"/>
</dbReference>
<dbReference type="Pfam" id="PF00110">
    <property type="entry name" value="wnt"/>
    <property type="match status" value="1"/>
</dbReference>
<dbReference type="PRINTS" id="PR01349">
    <property type="entry name" value="WNTPROTEIN"/>
</dbReference>
<dbReference type="SMART" id="SM00097">
    <property type="entry name" value="WNT1"/>
    <property type="match status" value="1"/>
</dbReference>
<dbReference type="PROSITE" id="PS00246">
    <property type="entry name" value="WNT1"/>
    <property type="match status" value="1"/>
</dbReference>
<name>WNT9B_MOUSE</name>
<evidence type="ECO:0000250" key="1">
    <source>
        <dbReference type="UniProtKB" id="O14905"/>
    </source>
</evidence>
<evidence type="ECO:0000250" key="2">
    <source>
        <dbReference type="UniProtKB" id="P27467"/>
    </source>
</evidence>
<evidence type="ECO:0000250" key="3">
    <source>
        <dbReference type="UniProtKB" id="P28026"/>
    </source>
</evidence>
<evidence type="ECO:0000250" key="4">
    <source>
        <dbReference type="UniProtKB" id="P56704"/>
    </source>
</evidence>
<evidence type="ECO:0000255" key="5"/>
<evidence type="ECO:0000269" key="6">
    <source>
    </source>
</evidence>
<evidence type="ECO:0000269" key="7">
    <source>
    </source>
</evidence>
<evidence type="ECO:0000269" key="8">
    <source>
    </source>
</evidence>
<evidence type="ECO:0000269" key="9">
    <source>
    </source>
</evidence>
<evidence type="ECO:0000303" key="10">
    <source>
    </source>
</evidence>
<evidence type="ECO:0000303" key="11">
    <source>
    </source>
</evidence>
<evidence type="ECO:0000303" key="12">
    <source>
    </source>
</evidence>
<evidence type="ECO:0000305" key="13"/>
<organism>
    <name type="scientific">Mus musculus</name>
    <name type="common">Mouse</name>
    <dbReference type="NCBI Taxonomy" id="10090"/>
    <lineage>
        <taxon>Eukaryota</taxon>
        <taxon>Metazoa</taxon>
        <taxon>Chordata</taxon>
        <taxon>Craniata</taxon>
        <taxon>Vertebrata</taxon>
        <taxon>Euteleostomi</taxon>
        <taxon>Mammalia</taxon>
        <taxon>Eutheria</taxon>
        <taxon>Euarchontoglires</taxon>
        <taxon>Glires</taxon>
        <taxon>Rodentia</taxon>
        <taxon>Myomorpha</taxon>
        <taxon>Muroidea</taxon>
        <taxon>Muridae</taxon>
        <taxon>Murinae</taxon>
        <taxon>Mus</taxon>
        <taxon>Mus</taxon>
    </lineage>
</organism>
<sequence>MRPAPALALAALCLLVLPAAAAAAAYFGLTGREVLTPFPGLGTAAAPAQAGAHLKQCDLLKLSRRQKQLCRREPGLAETLRDAAHLGLLECQFQFRQERWNCSLEGRTGLLQRGFKETAFLYAVSAAALTHALARACSAGRMERCTCDDSPGLESRQAWQWGVCGDNLKYSTKFLSNFLGPKRGSKDLRARADAHNTHVGIKAVKSGLRTTCKCHGVSGSCAVRTCWKQLSPFRETGQVLKLRYDTAVKVSSATNEALGRLELWAPAKPGGPAKGLAPRPGDLVYMEDSPSFCRPSKYSPGTAGRVCSRDSSCSSLCCGRGYDTQSRMVVFSCHCQVQWCCYVECQQCAQQELVYTCKR</sequence>
<comment type="function">
    <text evidence="6 7 8 9 13">Ligand for members of the frizzled family of seven transmembrane receptors (Probable). Functions in the canonical Wnt/beta-catenin signaling pathway (PubMed:16054034, PubMed:17537789, PubMed:22461561). Required for normal embryonic kidney development, and for normal development of the urogenital tract, including uterus and part of the oviduct and the upper vagina in females, and epididymis and vas deferens in males (PubMed:16054034). Activates a signaling cascade in the metanephric mesenchyme that induces tubulogenesis (PubMed:16054034, PubMed:17537789). Acts upstream of WNT4 in the signaling pathways that mediate development of kidney tubules and the Muellerian ducts (PubMed:16054034). Plays a role in cranofacial development and is required for normal fusion of the palate during embryonic development (PubMed:16054034, PubMed:22461561, PubMed:25257647).</text>
</comment>
<comment type="subunit">
    <text evidence="1">Forms a soluble 1:1 complex with AFM; this prevents oligomerization and is required for prolonged biological activity. The complex with AFM may represent the physiological form in body fluids. Component of the Wnt-Fzd-LRP5-LRP6 signaling complex that contains a WNT protein, a FZD protein and LRP5 or LRP6. Interacts directly in the complex with LRP6. Interacts with PKD1 (via extracellular domain).</text>
</comment>
<comment type="subcellular location">
    <subcellularLocation>
        <location evidence="1">Secreted</location>
        <location evidence="1">Extracellular space</location>
        <location evidence="1">Extracellular matrix</location>
    </subcellularLocation>
    <subcellularLocation>
        <location evidence="1">Secreted</location>
    </subcellularLocation>
</comment>
<comment type="developmental stage">
    <text evidence="6 9">Detected throughout the Wolffian duct epithelium from 9.5 dpc to 14.5 dpc. Detected in the stalk region of the ureteric bud at 10.5 to 11.0 dpc. Continues to be expressed in the developing collecting duct system throughout nephrogenesis, but is not detected at branching tips. Within the urogenital tract, expression is restricted to the kidney at 15.5 dpc (PubMed:16054034). Detected in embryonic head from early headfold stages to at least 12 dpc.</text>
</comment>
<comment type="PTM">
    <text evidence="2 4">Palmitoleoylation is required for efficient binding to frizzled receptors. Depalmitoleoylation leads to Wnt signaling pathway inhibition.</text>
</comment>
<comment type="disease">
    <text evidence="9">Spontaneous insertion of a retrotransposon in the Wnt9b promoter region causes reduced Wnt9b expression. Decreased Wnt9b expression is correlated with increased incidence of cleft lip and palate.</text>
</comment>
<comment type="disruption phenotype">
    <text evidence="6 8">Complete perinatal lethality. All pups die within the first 24 hours after birth (PubMed:16054034). Mutant pups lack kidneys. In addition, females have normal ovaries, but no uterus. Males have testes, but lack the epididymis (PubMed:16054034). The early stages of the development of the ureteric component of the metanephric kidney appear normal, but branching after the T-stage is disrupted, and mutants lack mesonephric tubules at 11.5 dpc (PubMed:16054034). Mutant embryos have a cleft lip and palate phenotype at 18.5 dpc, plus additional, bilateral defects in upper jaw skeleton development (PubMed:16054034, PubMed:22461561). Embryos appear normal at 10.5 dpc, but display hypoplasia of the lateral and medial nasal process at 11 dpc. At 11.5 dpc, they display a clear bilateral gap between the medial nasal process and the fused medial end of the lateral nasal process and the maxillary process. The palatal shelves display lack of midline contact at 14.5 dpc.</text>
</comment>
<comment type="similarity">
    <text evidence="13">Belongs to the Wnt family.</text>
</comment>
<gene>
    <name type="primary">Wnt9b</name>
    <name evidence="10" type="synonym">Wnt14b</name>
    <name evidence="12" type="synonym">Wnt15</name>
</gene>
<feature type="signal peptide" evidence="5">
    <location>
        <begin position="1"/>
        <end position="23"/>
    </location>
</feature>
<feature type="chain" id="PRO_0000041459" description="Protein Wnt-9b">
    <location>
        <begin position="24"/>
        <end position="359"/>
    </location>
</feature>
<feature type="lipid moiety-binding region" description="O-palmitoleoyl serine; by PORCN" evidence="4">
    <location>
        <position position="218"/>
    </location>
</feature>
<feature type="glycosylation site" description="N-linked (GlcNAc...) asparagine" evidence="5">
    <location>
        <position position="101"/>
    </location>
</feature>
<feature type="disulfide bond" evidence="3">
    <location>
        <begin position="91"/>
        <end position="102"/>
    </location>
</feature>
<feature type="disulfide bond" evidence="3">
    <location>
        <begin position="137"/>
        <end position="145"/>
    </location>
</feature>
<feature type="disulfide bond" evidence="3">
    <location>
        <begin position="147"/>
        <end position="164"/>
    </location>
</feature>
<feature type="disulfide bond" evidence="3">
    <location>
        <begin position="212"/>
        <end position="226"/>
    </location>
</feature>
<feature type="disulfide bond" evidence="3">
    <location>
        <begin position="214"/>
        <end position="221"/>
    </location>
</feature>
<feature type="disulfide bond" evidence="3">
    <location>
        <begin position="293"/>
        <end position="318"/>
    </location>
</feature>
<feature type="disulfide bond" evidence="3">
    <location>
        <begin position="307"/>
        <end position="313"/>
    </location>
</feature>
<feature type="disulfide bond" evidence="3">
    <location>
        <begin position="317"/>
        <end position="357"/>
    </location>
</feature>
<feature type="disulfide bond" evidence="3">
    <location>
        <begin position="333"/>
        <end position="348"/>
    </location>
</feature>
<feature type="disulfide bond" evidence="3">
    <location>
        <begin position="335"/>
        <end position="345"/>
    </location>
</feature>
<feature type="disulfide bond" evidence="3">
    <location>
        <begin position="340"/>
        <end position="341"/>
    </location>
</feature>
<feature type="sequence conflict" description="In Ref. 3; AAC39950." evidence="13" ref="3">
    <original>D</original>
    <variation>G</variation>
    <location>
        <position position="310"/>
    </location>
</feature>
<keyword id="KW-0217">Developmental protein</keyword>
<keyword id="KW-1015">Disulfide bond</keyword>
<keyword id="KW-0272">Extracellular matrix</keyword>
<keyword id="KW-0325">Glycoprotein</keyword>
<keyword id="KW-0449">Lipoprotein</keyword>
<keyword id="KW-1185">Reference proteome</keyword>
<keyword id="KW-0964">Secreted</keyword>
<keyword id="KW-0732">Signal</keyword>
<keyword id="KW-0879">Wnt signaling pathway</keyword>
<accession>O35468</accession>
<accession>Q8VI90</accession>
<protein>
    <recommendedName>
        <fullName>Protein Wnt-9b</fullName>
    </recommendedName>
    <alternativeName>
        <fullName evidence="10">Protein Wnt-14b</fullName>
    </alternativeName>
    <alternativeName>
        <fullName evidence="12">Protein Wnt-15</fullName>
    </alternativeName>
</protein>